<sequence length="204" mass="23411">MIIYEESASDYYNKNDRLLYGIIEIAESTIVTGSNIISDLENQGSQLQSIHYNLEHIDSDIQIANDKMDHVESCLPSVRKTARKSFKKISKKLFKKKLVSKNSRLDSGVQNSEIQNNSKIQNNSEIQDNFANNFLDNPPDNSRHFSEDNIEKLHNIVCVLEKQANDISNILDEQNNTLEIIHNKIISDEIAIKKITRRIKHTQS</sequence>
<keyword id="KW-0175">Coiled coil</keyword>
<keyword id="KW-1185">Reference proteome</keyword>
<keyword id="KW-0677">Repeat</keyword>
<accession>Q5UR18</accession>
<organismHost>
    <name type="scientific">Acanthamoeba polyphaga</name>
    <name type="common">Amoeba</name>
    <dbReference type="NCBI Taxonomy" id="5757"/>
</organismHost>
<organism>
    <name type="scientific">Acanthamoeba polyphaga mimivirus</name>
    <name type="common">APMV</name>
    <dbReference type="NCBI Taxonomy" id="212035"/>
    <lineage>
        <taxon>Viruses</taxon>
        <taxon>Varidnaviria</taxon>
        <taxon>Bamfordvirae</taxon>
        <taxon>Nucleocytoviricota</taxon>
        <taxon>Megaviricetes</taxon>
        <taxon>Imitervirales</taxon>
        <taxon>Mimiviridae</taxon>
        <taxon>Megamimivirinae</taxon>
        <taxon>Mimivirus</taxon>
        <taxon>Mimivirus bradfordmassiliense</taxon>
    </lineage>
</organism>
<reference key="1">
    <citation type="journal article" date="2004" name="Science">
        <title>The 1.2-megabase genome sequence of Mimivirus.</title>
        <authorList>
            <person name="Raoult D."/>
            <person name="Audic S."/>
            <person name="Robert C."/>
            <person name="Abergel C."/>
            <person name="Renesto P."/>
            <person name="Ogata H."/>
            <person name="La Scola B."/>
            <person name="Susan M."/>
            <person name="Claverie J.-M."/>
        </authorList>
    </citation>
    <scope>NUCLEOTIDE SEQUENCE [LARGE SCALE GENOMIC DNA]</scope>
    <source>
        <strain>Rowbotham-Bradford</strain>
    </source>
</reference>
<gene>
    <name type="ordered locus">MIMI_L657</name>
</gene>
<evidence type="ECO:0000255" key="1"/>
<evidence type="ECO:0000255" key="2">
    <source>
        <dbReference type="PROSITE-ProRule" id="PRU00202"/>
    </source>
</evidence>
<feature type="chain" id="PRO_0000247287" description="Putative t-SNARE coiled-coil homology domain-containing protein L657">
    <location>
        <begin position="1"/>
        <end position="204"/>
    </location>
</feature>
<feature type="domain" description="t-SNARE coiled-coil homology 1" evidence="2">
    <location>
        <begin position="9"/>
        <end position="71"/>
    </location>
</feature>
<feature type="domain" description="t-SNARE coiled-coil homology 2" evidence="2">
    <location>
        <begin position="140"/>
        <end position="202"/>
    </location>
</feature>
<feature type="coiled-coil region" evidence="1">
    <location>
        <begin position="159"/>
        <end position="181"/>
    </location>
</feature>
<dbReference type="EMBL" id="AY653733">
    <property type="protein sequence ID" value="AAV50918.1"/>
    <property type="molecule type" value="Genomic_DNA"/>
</dbReference>
<dbReference type="KEGG" id="vg:9925302"/>
<dbReference type="Proteomes" id="UP000001134">
    <property type="component" value="Genome"/>
</dbReference>
<dbReference type="GO" id="GO:0005886">
    <property type="term" value="C:plasma membrane"/>
    <property type="evidence" value="ECO:0007669"/>
    <property type="project" value="TreeGrafter"/>
</dbReference>
<dbReference type="Gene3D" id="1.20.5.110">
    <property type="match status" value="2"/>
</dbReference>
<dbReference type="InterPro" id="IPR000727">
    <property type="entry name" value="T_SNARE_dom"/>
</dbReference>
<dbReference type="PANTHER" id="PTHR19305">
    <property type="entry name" value="SYNAPTOSOMAL ASSOCIATED PROTEIN"/>
    <property type="match status" value="1"/>
</dbReference>
<dbReference type="PANTHER" id="PTHR19305:SF9">
    <property type="entry name" value="SYNAPTOSOMAL-ASSOCIATED PROTEIN 29"/>
    <property type="match status" value="1"/>
</dbReference>
<dbReference type="SMART" id="SM00397">
    <property type="entry name" value="t_SNARE"/>
    <property type="match status" value="2"/>
</dbReference>
<dbReference type="SUPFAM" id="SSF58038">
    <property type="entry name" value="SNARE fusion complex"/>
    <property type="match status" value="2"/>
</dbReference>
<dbReference type="PROSITE" id="PS50192">
    <property type="entry name" value="T_SNARE"/>
    <property type="match status" value="1"/>
</dbReference>
<proteinExistence type="predicted"/>
<name>YL657_MIMIV</name>
<protein>
    <recommendedName>
        <fullName>Putative t-SNARE coiled-coil homology domain-containing protein L657</fullName>
    </recommendedName>
</protein>